<name>DDL_METCA</name>
<comment type="function">
    <text evidence="2">Cell wall formation.</text>
</comment>
<comment type="catalytic activity">
    <reaction evidence="2">
        <text>2 D-alanine + ATP = D-alanyl-D-alanine + ADP + phosphate + H(+)</text>
        <dbReference type="Rhea" id="RHEA:11224"/>
        <dbReference type="ChEBI" id="CHEBI:15378"/>
        <dbReference type="ChEBI" id="CHEBI:30616"/>
        <dbReference type="ChEBI" id="CHEBI:43474"/>
        <dbReference type="ChEBI" id="CHEBI:57416"/>
        <dbReference type="ChEBI" id="CHEBI:57822"/>
        <dbReference type="ChEBI" id="CHEBI:456216"/>
        <dbReference type="EC" id="6.3.2.4"/>
    </reaction>
</comment>
<comment type="cofactor">
    <cofactor evidence="1">
        <name>Mg(2+)</name>
        <dbReference type="ChEBI" id="CHEBI:18420"/>
    </cofactor>
    <cofactor evidence="1">
        <name>Mn(2+)</name>
        <dbReference type="ChEBI" id="CHEBI:29035"/>
    </cofactor>
    <text evidence="1">Binds 2 magnesium or manganese ions per subunit.</text>
</comment>
<comment type="pathway">
    <text evidence="2">Cell wall biogenesis; peptidoglycan biosynthesis.</text>
</comment>
<comment type="subcellular location">
    <subcellularLocation>
        <location evidence="2">Cytoplasm</location>
    </subcellularLocation>
</comment>
<comment type="similarity">
    <text evidence="2">Belongs to the D-alanine--D-alanine ligase family.</text>
</comment>
<organism>
    <name type="scientific">Methylococcus capsulatus (strain ATCC 33009 / NCIMB 11132 / Bath)</name>
    <dbReference type="NCBI Taxonomy" id="243233"/>
    <lineage>
        <taxon>Bacteria</taxon>
        <taxon>Pseudomonadati</taxon>
        <taxon>Pseudomonadota</taxon>
        <taxon>Gammaproteobacteria</taxon>
        <taxon>Methylococcales</taxon>
        <taxon>Methylococcaceae</taxon>
        <taxon>Methylococcus</taxon>
    </lineage>
</organism>
<reference key="1">
    <citation type="journal article" date="2004" name="PLoS Biol.">
        <title>Genomic insights into methanotrophy: the complete genome sequence of Methylococcus capsulatus (Bath).</title>
        <authorList>
            <person name="Ward N.L."/>
            <person name="Larsen O."/>
            <person name="Sakwa J."/>
            <person name="Bruseth L."/>
            <person name="Khouri H.M."/>
            <person name="Durkin A.S."/>
            <person name="Dimitrov G."/>
            <person name="Jiang L."/>
            <person name="Scanlan D."/>
            <person name="Kang K.H."/>
            <person name="Lewis M.R."/>
            <person name="Nelson K.E."/>
            <person name="Methe B.A."/>
            <person name="Wu M."/>
            <person name="Heidelberg J.F."/>
            <person name="Paulsen I.T."/>
            <person name="Fouts D.E."/>
            <person name="Ravel J."/>
            <person name="Tettelin H."/>
            <person name="Ren Q."/>
            <person name="Read T.D."/>
            <person name="DeBoy R.T."/>
            <person name="Seshadri R."/>
            <person name="Salzberg S.L."/>
            <person name="Jensen H.B."/>
            <person name="Birkeland N.K."/>
            <person name="Nelson W.C."/>
            <person name="Dodson R.J."/>
            <person name="Grindhaug S.H."/>
            <person name="Holt I.E."/>
            <person name="Eidhammer I."/>
            <person name="Jonasen I."/>
            <person name="Vanaken S."/>
            <person name="Utterback T.R."/>
            <person name="Feldblyum T.V."/>
            <person name="Fraser C.M."/>
            <person name="Lillehaug J.R."/>
            <person name="Eisen J.A."/>
        </authorList>
    </citation>
    <scope>NUCLEOTIDE SEQUENCE [LARGE SCALE GENOMIC DNA]</scope>
    <source>
        <strain>ATCC 33009 / NCIMB 11132 / Bath</strain>
    </source>
</reference>
<evidence type="ECO:0000250" key="1"/>
<evidence type="ECO:0000255" key="2">
    <source>
        <dbReference type="HAMAP-Rule" id="MF_00047"/>
    </source>
</evidence>
<accession>Q604W0</accession>
<sequence length="309" mass="33377">MEKRIQQASKFGKVAVLMGGSAAEREISLKSGKAVLEALRSGGIDAEGIDVGRDLIAPLLERRFDRVFNVIHGRGGEDGVLQGALACLRVPCTGSGVLASALSMDKLRTKLCWTGAGLPTPPWLRLDSPDDLERCRQALGFPVIVKPAEEGSSIGMSRAATAEELAQAWERASGYGCAVFAERWIDGVEYTGGMLKGVPLPLIRLETPHAFYDFDAKYRADTTRYHCPCGLDTGREAELQALVLRACQIVGVSGWGRVDLLVDRSGQPWLIEVNTVPGMTDHSLVPMAAKAAGIDFQELVWHILETSFA</sequence>
<protein>
    <recommendedName>
        <fullName evidence="2">D-alanine--D-alanine ligase</fullName>
        <ecNumber evidence="2">6.3.2.4</ecNumber>
    </recommendedName>
    <alternativeName>
        <fullName evidence="2">D-Ala-D-Ala ligase</fullName>
    </alternativeName>
    <alternativeName>
        <fullName evidence="2">D-alanylalanine synthetase</fullName>
    </alternativeName>
</protein>
<keyword id="KW-0067">ATP-binding</keyword>
<keyword id="KW-0133">Cell shape</keyword>
<keyword id="KW-0961">Cell wall biogenesis/degradation</keyword>
<keyword id="KW-0963">Cytoplasm</keyword>
<keyword id="KW-0436">Ligase</keyword>
<keyword id="KW-0460">Magnesium</keyword>
<keyword id="KW-0464">Manganese</keyword>
<keyword id="KW-0479">Metal-binding</keyword>
<keyword id="KW-0547">Nucleotide-binding</keyword>
<keyword id="KW-0573">Peptidoglycan synthesis</keyword>
<keyword id="KW-1185">Reference proteome</keyword>
<proteinExistence type="inferred from homology"/>
<gene>
    <name evidence="2" type="primary">ddl</name>
    <name type="ordered locus">MCA2426</name>
</gene>
<feature type="chain" id="PRO_0000341134" description="D-alanine--D-alanine ligase">
    <location>
        <begin position="1"/>
        <end position="309"/>
    </location>
</feature>
<feature type="domain" description="ATP-grasp" evidence="2">
    <location>
        <begin position="110"/>
        <end position="305"/>
    </location>
</feature>
<feature type="binding site" evidence="2">
    <location>
        <begin position="136"/>
        <end position="191"/>
    </location>
    <ligand>
        <name>ATP</name>
        <dbReference type="ChEBI" id="CHEBI:30616"/>
    </ligand>
</feature>
<feature type="binding site" evidence="2">
    <location>
        <position position="259"/>
    </location>
    <ligand>
        <name>Mg(2+)</name>
        <dbReference type="ChEBI" id="CHEBI:18420"/>
        <label>1</label>
    </ligand>
</feature>
<feature type="binding site" evidence="2">
    <location>
        <position position="272"/>
    </location>
    <ligand>
        <name>Mg(2+)</name>
        <dbReference type="ChEBI" id="CHEBI:18420"/>
        <label>1</label>
    </ligand>
</feature>
<feature type="binding site" evidence="2">
    <location>
        <position position="272"/>
    </location>
    <ligand>
        <name>Mg(2+)</name>
        <dbReference type="ChEBI" id="CHEBI:18420"/>
        <label>2</label>
    </ligand>
</feature>
<feature type="binding site" evidence="2">
    <location>
        <position position="274"/>
    </location>
    <ligand>
        <name>Mg(2+)</name>
        <dbReference type="ChEBI" id="CHEBI:18420"/>
        <label>2</label>
    </ligand>
</feature>
<dbReference type="EC" id="6.3.2.4" evidence="2"/>
<dbReference type="EMBL" id="AE017282">
    <property type="protein sequence ID" value="AAU91482.1"/>
    <property type="molecule type" value="Genomic_DNA"/>
</dbReference>
<dbReference type="RefSeq" id="WP_010961651.1">
    <property type="nucleotide sequence ID" value="NC_002977.6"/>
</dbReference>
<dbReference type="SMR" id="Q604W0"/>
<dbReference type="STRING" id="243233.MCA2426"/>
<dbReference type="GeneID" id="88224627"/>
<dbReference type="KEGG" id="mca:MCA2426"/>
<dbReference type="eggNOG" id="COG1181">
    <property type="taxonomic scope" value="Bacteria"/>
</dbReference>
<dbReference type="HOGENOM" id="CLU_039268_1_2_6"/>
<dbReference type="UniPathway" id="UPA00219"/>
<dbReference type="Proteomes" id="UP000006821">
    <property type="component" value="Chromosome"/>
</dbReference>
<dbReference type="GO" id="GO:0005829">
    <property type="term" value="C:cytosol"/>
    <property type="evidence" value="ECO:0007669"/>
    <property type="project" value="TreeGrafter"/>
</dbReference>
<dbReference type="GO" id="GO:0005524">
    <property type="term" value="F:ATP binding"/>
    <property type="evidence" value="ECO:0007669"/>
    <property type="project" value="UniProtKB-KW"/>
</dbReference>
<dbReference type="GO" id="GO:0008716">
    <property type="term" value="F:D-alanine-D-alanine ligase activity"/>
    <property type="evidence" value="ECO:0007669"/>
    <property type="project" value="UniProtKB-UniRule"/>
</dbReference>
<dbReference type="GO" id="GO:0046872">
    <property type="term" value="F:metal ion binding"/>
    <property type="evidence" value="ECO:0007669"/>
    <property type="project" value="UniProtKB-KW"/>
</dbReference>
<dbReference type="GO" id="GO:0071555">
    <property type="term" value="P:cell wall organization"/>
    <property type="evidence" value="ECO:0007669"/>
    <property type="project" value="UniProtKB-KW"/>
</dbReference>
<dbReference type="GO" id="GO:0009252">
    <property type="term" value="P:peptidoglycan biosynthetic process"/>
    <property type="evidence" value="ECO:0007669"/>
    <property type="project" value="UniProtKB-UniRule"/>
</dbReference>
<dbReference type="GO" id="GO:0008360">
    <property type="term" value="P:regulation of cell shape"/>
    <property type="evidence" value="ECO:0007669"/>
    <property type="project" value="UniProtKB-KW"/>
</dbReference>
<dbReference type="FunFam" id="3.30.470.20:FF:000008">
    <property type="entry name" value="D-alanine--D-alanine ligase"/>
    <property type="match status" value="1"/>
</dbReference>
<dbReference type="Gene3D" id="3.40.50.20">
    <property type="match status" value="1"/>
</dbReference>
<dbReference type="Gene3D" id="3.30.1490.20">
    <property type="entry name" value="ATP-grasp fold, A domain"/>
    <property type="match status" value="1"/>
</dbReference>
<dbReference type="Gene3D" id="3.30.470.20">
    <property type="entry name" value="ATP-grasp fold, B domain"/>
    <property type="match status" value="1"/>
</dbReference>
<dbReference type="HAMAP" id="MF_00047">
    <property type="entry name" value="Dala_Dala_lig"/>
    <property type="match status" value="1"/>
</dbReference>
<dbReference type="InterPro" id="IPR011761">
    <property type="entry name" value="ATP-grasp"/>
</dbReference>
<dbReference type="InterPro" id="IPR013815">
    <property type="entry name" value="ATP_grasp_subdomain_1"/>
</dbReference>
<dbReference type="InterPro" id="IPR000291">
    <property type="entry name" value="D-Ala_lig_Van_CS"/>
</dbReference>
<dbReference type="InterPro" id="IPR005905">
    <property type="entry name" value="D_ala_D_ala"/>
</dbReference>
<dbReference type="InterPro" id="IPR011095">
    <property type="entry name" value="Dala_Dala_lig_C"/>
</dbReference>
<dbReference type="InterPro" id="IPR016185">
    <property type="entry name" value="PreATP-grasp_dom_sf"/>
</dbReference>
<dbReference type="NCBIfam" id="TIGR01205">
    <property type="entry name" value="D_ala_D_alaTIGR"/>
    <property type="match status" value="1"/>
</dbReference>
<dbReference type="NCBIfam" id="NF002378">
    <property type="entry name" value="PRK01372.1"/>
    <property type="match status" value="1"/>
</dbReference>
<dbReference type="PANTHER" id="PTHR23132">
    <property type="entry name" value="D-ALANINE--D-ALANINE LIGASE"/>
    <property type="match status" value="1"/>
</dbReference>
<dbReference type="PANTHER" id="PTHR23132:SF23">
    <property type="entry name" value="D-ALANINE--D-ALANINE LIGASE B"/>
    <property type="match status" value="1"/>
</dbReference>
<dbReference type="Pfam" id="PF07478">
    <property type="entry name" value="Dala_Dala_lig_C"/>
    <property type="match status" value="1"/>
</dbReference>
<dbReference type="PIRSF" id="PIRSF039102">
    <property type="entry name" value="Ddl/VanB"/>
    <property type="match status" value="1"/>
</dbReference>
<dbReference type="SUPFAM" id="SSF56059">
    <property type="entry name" value="Glutathione synthetase ATP-binding domain-like"/>
    <property type="match status" value="1"/>
</dbReference>
<dbReference type="SUPFAM" id="SSF52440">
    <property type="entry name" value="PreATP-grasp domain"/>
    <property type="match status" value="1"/>
</dbReference>
<dbReference type="PROSITE" id="PS50975">
    <property type="entry name" value="ATP_GRASP"/>
    <property type="match status" value="1"/>
</dbReference>
<dbReference type="PROSITE" id="PS00843">
    <property type="entry name" value="DALA_DALA_LIGASE_1"/>
    <property type="match status" value="1"/>
</dbReference>
<dbReference type="PROSITE" id="PS00844">
    <property type="entry name" value="DALA_DALA_LIGASE_2"/>
    <property type="match status" value="1"/>
</dbReference>